<name>SRRM5_HUMAN</name>
<comment type="caution">
    <text evidence="2">Overlaps in opposite strand with ZNF428.</text>
</comment>
<comment type="sequence caution" evidence="2">
    <conflict type="erroneous initiation">
        <sequence resource="EMBL-CDS" id="BAG60212"/>
    </conflict>
    <text>Extended N-terminus.</text>
</comment>
<sequence length="715" mass="80355">MSSPKRSSKPSMSLAPSGSSMPTADPKPPASLKSTKSATPNRSLVPTKPATSRNSVMSPSSSKSTKSTSTKRAPSNRPSSRSRVRSKARTPSRVSTDTRTSKASKASDVRCHQRRGTHSRGRTPGRRGSRSSKRSPSRASTPGRIRTHGARPGMASRVRTPTSQQKGSRGKSYGRPRTSNRERSDSQPRNLSKKSYRPPGGSGIGRSSELAVTPSTAKCQTPTGIPSKEKSDNPSPSSSRKVKSYGQMIIPSREKSYSPTEMSSRVKSYNQASTRSRPQSHSQSRSPRRSRSGSQKRTHSRVRSHSWKRNHSRARSRTRKGILSQMGRHSQSRSHSKGKSQNQSRTPRRGRSHNWSRNPSKERSHSHSRSSSKERDHRGSSSPRKESGRSQSGSPNKQRDHSRSRSPNKARDRSRSRSPYKARDRSRSRSPNKARDCSRSRSPYKARDRSRSRSPNKARDHSRSRSPNKARDRSRSRSPSKERDHSQLGSPSKERDHRRSRSPSKERQCRQSRSSSKERDHRRSRSPSKERQRRQSRSPNKERDRSQSRSPSEEREHRQSRSPSKERDRRRWRSPSKERERRQSRSSSEERDHSRSRSPNKQSGYSRPRASSKEKAHSRSRTPSKEGNHSQSRTSSKESDPSQSTVPRSPDWKRSPTRTSSLSQNRTPSKTSSHSPSTFPSGGQTLSQDDSQADATTSKATLPGERSSSSSSKLA</sequence>
<organism>
    <name type="scientific">Homo sapiens</name>
    <name type="common">Human</name>
    <dbReference type="NCBI Taxonomy" id="9606"/>
    <lineage>
        <taxon>Eukaryota</taxon>
        <taxon>Metazoa</taxon>
        <taxon>Chordata</taxon>
        <taxon>Craniata</taxon>
        <taxon>Vertebrata</taxon>
        <taxon>Euteleostomi</taxon>
        <taxon>Mammalia</taxon>
        <taxon>Eutheria</taxon>
        <taxon>Euarchontoglires</taxon>
        <taxon>Primates</taxon>
        <taxon>Haplorrhini</taxon>
        <taxon>Catarrhini</taxon>
        <taxon>Hominidae</taxon>
        <taxon>Homo</taxon>
    </lineage>
</organism>
<proteinExistence type="evidence at protein level"/>
<keyword id="KW-1267">Proteomics identification</keyword>
<keyword id="KW-1185">Reference proteome</keyword>
<evidence type="ECO:0000256" key="1">
    <source>
        <dbReference type="SAM" id="MobiDB-lite"/>
    </source>
</evidence>
<evidence type="ECO:0000305" key="2"/>
<reference key="1">
    <citation type="journal article" date="2004" name="Nat. Genet.">
        <title>Complete sequencing and characterization of 21,243 full-length human cDNAs.</title>
        <authorList>
            <person name="Ota T."/>
            <person name="Suzuki Y."/>
            <person name="Nishikawa T."/>
            <person name="Otsuki T."/>
            <person name="Sugiyama T."/>
            <person name="Irie R."/>
            <person name="Wakamatsu A."/>
            <person name="Hayashi K."/>
            <person name="Sato H."/>
            <person name="Nagai K."/>
            <person name="Kimura K."/>
            <person name="Makita H."/>
            <person name="Sekine M."/>
            <person name="Obayashi M."/>
            <person name="Nishi T."/>
            <person name="Shibahara T."/>
            <person name="Tanaka T."/>
            <person name="Ishii S."/>
            <person name="Yamamoto J."/>
            <person name="Saito K."/>
            <person name="Kawai Y."/>
            <person name="Isono Y."/>
            <person name="Nakamura Y."/>
            <person name="Nagahari K."/>
            <person name="Murakami K."/>
            <person name="Yasuda T."/>
            <person name="Iwayanagi T."/>
            <person name="Wagatsuma M."/>
            <person name="Shiratori A."/>
            <person name="Sudo H."/>
            <person name="Hosoiri T."/>
            <person name="Kaku Y."/>
            <person name="Kodaira H."/>
            <person name="Kondo H."/>
            <person name="Sugawara M."/>
            <person name="Takahashi M."/>
            <person name="Kanda K."/>
            <person name="Yokoi T."/>
            <person name="Furuya T."/>
            <person name="Kikkawa E."/>
            <person name="Omura Y."/>
            <person name="Abe K."/>
            <person name="Kamihara K."/>
            <person name="Katsuta N."/>
            <person name="Sato K."/>
            <person name="Tanikawa M."/>
            <person name="Yamazaki M."/>
            <person name="Ninomiya K."/>
            <person name="Ishibashi T."/>
            <person name="Yamashita H."/>
            <person name="Murakawa K."/>
            <person name="Fujimori K."/>
            <person name="Tanai H."/>
            <person name="Kimata M."/>
            <person name="Watanabe M."/>
            <person name="Hiraoka S."/>
            <person name="Chiba Y."/>
            <person name="Ishida S."/>
            <person name="Ono Y."/>
            <person name="Takiguchi S."/>
            <person name="Watanabe S."/>
            <person name="Yosida M."/>
            <person name="Hotuta T."/>
            <person name="Kusano J."/>
            <person name="Kanehori K."/>
            <person name="Takahashi-Fujii A."/>
            <person name="Hara H."/>
            <person name="Tanase T.-O."/>
            <person name="Nomura Y."/>
            <person name="Togiya S."/>
            <person name="Komai F."/>
            <person name="Hara R."/>
            <person name="Takeuchi K."/>
            <person name="Arita M."/>
            <person name="Imose N."/>
            <person name="Musashino K."/>
            <person name="Yuuki H."/>
            <person name="Oshima A."/>
            <person name="Sasaki N."/>
            <person name="Aotsuka S."/>
            <person name="Yoshikawa Y."/>
            <person name="Matsunawa H."/>
            <person name="Ichihara T."/>
            <person name="Shiohata N."/>
            <person name="Sano S."/>
            <person name="Moriya S."/>
            <person name="Momiyama H."/>
            <person name="Satoh N."/>
            <person name="Takami S."/>
            <person name="Terashima Y."/>
            <person name="Suzuki O."/>
            <person name="Nakagawa S."/>
            <person name="Senoh A."/>
            <person name="Mizoguchi H."/>
            <person name="Goto Y."/>
            <person name="Shimizu F."/>
            <person name="Wakebe H."/>
            <person name="Hishigaki H."/>
            <person name="Watanabe T."/>
            <person name="Sugiyama A."/>
            <person name="Takemoto M."/>
            <person name="Kawakami B."/>
            <person name="Yamazaki M."/>
            <person name="Watanabe K."/>
            <person name="Kumagai A."/>
            <person name="Itakura S."/>
            <person name="Fukuzumi Y."/>
            <person name="Fujimori Y."/>
            <person name="Komiyama M."/>
            <person name="Tashiro H."/>
            <person name="Tanigami A."/>
            <person name="Fujiwara T."/>
            <person name="Ono T."/>
            <person name="Yamada K."/>
            <person name="Fujii Y."/>
            <person name="Ozaki K."/>
            <person name="Hirao M."/>
            <person name="Ohmori Y."/>
            <person name="Kawabata A."/>
            <person name="Hikiji T."/>
            <person name="Kobatake N."/>
            <person name="Inagaki H."/>
            <person name="Ikema Y."/>
            <person name="Okamoto S."/>
            <person name="Okitani R."/>
            <person name="Kawakami T."/>
            <person name="Noguchi S."/>
            <person name="Itoh T."/>
            <person name="Shigeta K."/>
            <person name="Senba T."/>
            <person name="Matsumura K."/>
            <person name="Nakajima Y."/>
            <person name="Mizuno T."/>
            <person name="Morinaga M."/>
            <person name="Sasaki M."/>
            <person name="Togashi T."/>
            <person name="Oyama M."/>
            <person name="Hata H."/>
            <person name="Watanabe M."/>
            <person name="Komatsu T."/>
            <person name="Mizushima-Sugano J."/>
            <person name="Satoh T."/>
            <person name="Shirai Y."/>
            <person name="Takahashi Y."/>
            <person name="Nakagawa K."/>
            <person name="Okumura K."/>
            <person name="Nagase T."/>
            <person name="Nomura N."/>
            <person name="Kikuchi H."/>
            <person name="Masuho Y."/>
            <person name="Yamashita R."/>
            <person name="Nakai K."/>
            <person name="Yada T."/>
            <person name="Nakamura Y."/>
            <person name="Ohara O."/>
            <person name="Isogai T."/>
            <person name="Sugano S."/>
        </authorList>
    </citation>
    <scope>NUCLEOTIDE SEQUENCE [LARGE SCALE MRNA]</scope>
    <source>
        <tissue>Heart</tissue>
        <tissue>Testis</tissue>
    </source>
</reference>
<reference key="2">
    <citation type="journal article" date="2004" name="Nature">
        <title>The DNA sequence and biology of human chromosome 19.</title>
        <authorList>
            <person name="Grimwood J."/>
            <person name="Gordon L.A."/>
            <person name="Olsen A.S."/>
            <person name="Terry A."/>
            <person name="Schmutz J."/>
            <person name="Lamerdin J.E."/>
            <person name="Hellsten U."/>
            <person name="Goodstein D."/>
            <person name="Couronne O."/>
            <person name="Tran-Gyamfi M."/>
            <person name="Aerts A."/>
            <person name="Altherr M."/>
            <person name="Ashworth L."/>
            <person name="Bajorek E."/>
            <person name="Black S."/>
            <person name="Branscomb E."/>
            <person name="Caenepeel S."/>
            <person name="Carrano A.V."/>
            <person name="Caoile C."/>
            <person name="Chan Y.M."/>
            <person name="Christensen M."/>
            <person name="Cleland C.A."/>
            <person name="Copeland A."/>
            <person name="Dalin E."/>
            <person name="Dehal P."/>
            <person name="Denys M."/>
            <person name="Detter J.C."/>
            <person name="Escobar J."/>
            <person name="Flowers D."/>
            <person name="Fotopulos D."/>
            <person name="Garcia C."/>
            <person name="Georgescu A.M."/>
            <person name="Glavina T."/>
            <person name="Gomez M."/>
            <person name="Gonzales E."/>
            <person name="Groza M."/>
            <person name="Hammon N."/>
            <person name="Hawkins T."/>
            <person name="Haydu L."/>
            <person name="Ho I."/>
            <person name="Huang W."/>
            <person name="Israni S."/>
            <person name="Jett J."/>
            <person name="Kadner K."/>
            <person name="Kimball H."/>
            <person name="Kobayashi A."/>
            <person name="Larionov V."/>
            <person name="Leem S.-H."/>
            <person name="Lopez F."/>
            <person name="Lou Y."/>
            <person name="Lowry S."/>
            <person name="Malfatti S."/>
            <person name="Martinez D."/>
            <person name="McCready P.M."/>
            <person name="Medina C."/>
            <person name="Morgan J."/>
            <person name="Nelson K."/>
            <person name="Nolan M."/>
            <person name="Ovcharenko I."/>
            <person name="Pitluck S."/>
            <person name="Pollard M."/>
            <person name="Popkie A.P."/>
            <person name="Predki P."/>
            <person name="Quan G."/>
            <person name="Ramirez L."/>
            <person name="Rash S."/>
            <person name="Retterer J."/>
            <person name="Rodriguez A."/>
            <person name="Rogers S."/>
            <person name="Salamov A."/>
            <person name="Salazar A."/>
            <person name="She X."/>
            <person name="Smith D."/>
            <person name="Slezak T."/>
            <person name="Solovyev V."/>
            <person name="Thayer N."/>
            <person name="Tice H."/>
            <person name="Tsai M."/>
            <person name="Ustaszewska A."/>
            <person name="Vo N."/>
            <person name="Wagner M."/>
            <person name="Wheeler J."/>
            <person name="Wu K."/>
            <person name="Xie G."/>
            <person name="Yang J."/>
            <person name="Dubchak I."/>
            <person name="Furey T.S."/>
            <person name="DeJong P."/>
            <person name="Dickson M."/>
            <person name="Gordon D."/>
            <person name="Eichler E.E."/>
            <person name="Pennacchio L.A."/>
            <person name="Richardson P."/>
            <person name="Stubbs L."/>
            <person name="Rokhsar D.S."/>
            <person name="Myers R.M."/>
            <person name="Rubin E.M."/>
            <person name="Lucas S.M."/>
        </authorList>
    </citation>
    <scope>NUCLEOTIDE SEQUENCE [LARGE SCALE GENOMIC DNA]</scope>
</reference>
<reference key="3">
    <citation type="journal article" date="2008" name="Proc. Natl. Acad. Sci. U.S.A.">
        <title>A quantitative atlas of mitotic phosphorylation.</title>
        <authorList>
            <person name="Dephoure N."/>
            <person name="Zhou C."/>
            <person name="Villen J."/>
            <person name="Beausoleil S.A."/>
            <person name="Bakalarski C.E."/>
            <person name="Elledge S.J."/>
            <person name="Gygi S.P."/>
        </authorList>
    </citation>
    <scope>IDENTIFICATION BY MASS SPECTROMETRY [LARGE SCALE ANALYSIS]</scope>
    <source>
        <tissue>Cervix carcinoma</tissue>
    </source>
</reference>
<accession>B3KS81</accession>
<accession>B4DNF0</accession>
<feature type="chain" id="PRO_0000395306" description="Serine/arginine repetitive matrix protein 5">
    <location>
        <begin position="1"/>
        <end position="715"/>
    </location>
</feature>
<feature type="region of interest" description="Disordered" evidence="1">
    <location>
        <begin position="1"/>
        <end position="715"/>
    </location>
</feature>
<feature type="compositionally biased region" description="Low complexity" evidence="1">
    <location>
        <begin position="1"/>
        <end position="13"/>
    </location>
</feature>
<feature type="compositionally biased region" description="Polar residues" evidence="1">
    <location>
        <begin position="32"/>
        <end position="59"/>
    </location>
</feature>
<feature type="compositionally biased region" description="Low complexity" evidence="1">
    <location>
        <begin position="60"/>
        <end position="79"/>
    </location>
</feature>
<feature type="compositionally biased region" description="Basic residues" evidence="1">
    <location>
        <begin position="80"/>
        <end position="90"/>
    </location>
</feature>
<feature type="compositionally biased region" description="Polar residues" evidence="1">
    <location>
        <begin position="92"/>
        <end position="104"/>
    </location>
</feature>
<feature type="compositionally biased region" description="Basic residues" evidence="1">
    <location>
        <begin position="112"/>
        <end position="136"/>
    </location>
</feature>
<feature type="compositionally biased region" description="Polar residues" evidence="1">
    <location>
        <begin position="213"/>
        <end position="224"/>
    </location>
</feature>
<feature type="compositionally biased region" description="Polar residues" evidence="1">
    <location>
        <begin position="257"/>
        <end position="272"/>
    </location>
</feature>
<feature type="compositionally biased region" description="Low complexity" evidence="1">
    <location>
        <begin position="273"/>
        <end position="285"/>
    </location>
</feature>
<feature type="compositionally biased region" description="Basic residues" evidence="1">
    <location>
        <begin position="286"/>
        <end position="320"/>
    </location>
</feature>
<feature type="compositionally biased region" description="Basic and acidic residues" evidence="1">
    <location>
        <begin position="359"/>
        <end position="388"/>
    </location>
</feature>
<feature type="compositionally biased region" description="Basic and acidic residues" evidence="1">
    <location>
        <begin position="397"/>
        <end position="521"/>
    </location>
</feature>
<feature type="compositionally biased region" description="Basic residues" evidence="1">
    <location>
        <begin position="522"/>
        <end position="536"/>
    </location>
</feature>
<feature type="compositionally biased region" description="Basic and acidic residues" evidence="1">
    <location>
        <begin position="539"/>
        <end position="595"/>
    </location>
</feature>
<feature type="compositionally biased region" description="Basic and acidic residues" evidence="1">
    <location>
        <begin position="611"/>
        <end position="628"/>
    </location>
</feature>
<feature type="compositionally biased region" description="Polar residues" evidence="1">
    <location>
        <begin position="657"/>
        <end position="666"/>
    </location>
</feature>
<feature type="compositionally biased region" description="Low complexity" evidence="1">
    <location>
        <begin position="667"/>
        <end position="681"/>
    </location>
</feature>
<feature type="compositionally biased region" description="Polar residues" evidence="1">
    <location>
        <begin position="682"/>
        <end position="715"/>
    </location>
</feature>
<feature type="sequence conflict" description="In Ref. 1; BAG60212." evidence="2" ref="1">
    <original>R</original>
    <variation>G</variation>
    <location>
        <position position="375"/>
    </location>
</feature>
<feature type="sequence conflict" description="In Ref. 1; BAG60212." evidence="2" ref="1">
    <original>C</original>
    <variation>R</variation>
    <location>
        <position position="437"/>
    </location>
</feature>
<feature type="sequence conflict" description="In Ref. 1; BAG60212." evidence="2" ref="1">
    <original>S</original>
    <variation>R</variation>
    <location>
        <position position="639"/>
    </location>
</feature>
<feature type="sequence conflict" description="In Ref. 1; BAG60212." evidence="2" ref="1">
    <original>D</original>
    <variation>N</variation>
    <location>
        <position position="694"/>
    </location>
</feature>
<feature type="sequence conflict" description="In Ref. 1; BAG52643/AX747890." evidence="2" ref="1">
    <original>S</original>
    <variation>P</variation>
    <location>
        <position position="712"/>
    </location>
</feature>
<protein>
    <recommendedName>
        <fullName>Serine/arginine repetitive matrix protein 5</fullName>
    </recommendedName>
</protein>
<gene>
    <name type="primary">SRRM5</name>
    <name type="synonym">ZNF576</name>
</gene>
<dbReference type="EMBL" id="AK297891">
    <property type="protein sequence ID" value="BAG60212.1"/>
    <property type="status" value="ALT_INIT"/>
    <property type="molecule type" value="mRNA"/>
</dbReference>
<dbReference type="EMBL" id="AK093056">
    <property type="protein sequence ID" value="BAG52643.1"/>
    <property type="molecule type" value="mRNA"/>
</dbReference>
<dbReference type="EMBL" id="AX747890">
    <property type="status" value="NOT_ANNOTATED_CDS"/>
    <property type="molecule type" value="mRNA"/>
</dbReference>
<dbReference type="EMBL" id="AC006276">
    <property type="status" value="NOT_ANNOTATED_CDS"/>
    <property type="molecule type" value="Genomic_DNA"/>
</dbReference>
<dbReference type="CCDS" id="CCDS46095.1"/>
<dbReference type="RefSeq" id="NP_001139113.1">
    <property type="nucleotide sequence ID" value="NM_001145641.2"/>
</dbReference>
<dbReference type="BioGRID" id="936857">
    <property type="interactions" value="2"/>
</dbReference>
<dbReference type="IntAct" id="B3KS81">
    <property type="interactions" value="2"/>
</dbReference>
<dbReference type="STRING" id="9606.ENSP00000476253"/>
<dbReference type="GlyGen" id="B3KS81">
    <property type="glycosylation" value="4 sites, 1 O-linked glycan (3 sites)"/>
</dbReference>
<dbReference type="iPTMnet" id="B3KS81"/>
<dbReference type="PhosphoSitePlus" id="B3KS81"/>
<dbReference type="BioMuta" id="SRRM5"/>
<dbReference type="jPOST" id="B3KS81"/>
<dbReference type="MassIVE" id="B3KS81"/>
<dbReference type="PaxDb" id="9606-ENSP00000476253"/>
<dbReference type="PeptideAtlas" id="B3KS81"/>
<dbReference type="ProteomicsDB" id="3626"/>
<dbReference type="Antibodypedia" id="48986">
    <property type="antibodies" value="7 antibodies from 5 providers"/>
</dbReference>
<dbReference type="DNASU" id="100170229"/>
<dbReference type="Ensembl" id="ENST00000417606.3">
    <property type="protein sequence ID" value="ENSP00000414512.1"/>
    <property type="gene ID" value="ENSG00000226763.5"/>
</dbReference>
<dbReference type="Ensembl" id="ENST00000607544.1">
    <property type="protein sequence ID" value="ENSP00000476253.1"/>
    <property type="gene ID" value="ENSG00000226763.5"/>
</dbReference>
<dbReference type="GeneID" id="100170229"/>
<dbReference type="KEGG" id="hsa:100170229"/>
<dbReference type="MANE-Select" id="ENST00000417606.3">
    <property type="protein sequence ID" value="ENSP00000414512.1"/>
    <property type="RefSeq nucleotide sequence ID" value="NM_001145641.2"/>
    <property type="RefSeq protein sequence ID" value="NP_001139113.1"/>
</dbReference>
<dbReference type="UCSC" id="uc002oxb.5">
    <property type="organism name" value="human"/>
</dbReference>
<dbReference type="AGR" id="HGNC:37248"/>
<dbReference type="CTD" id="100170229"/>
<dbReference type="GeneCards" id="SRRM5"/>
<dbReference type="HGNC" id="HGNC:37248">
    <property type="gene designation" value="SRRM5"/>
</dbReference>
<dbReference type="HPA" id="ENSG00000226763">
    <property type="expression patterns" value="Tissue enriched (testis)"/>
</dbReference>
<dbReference type="neXtProt" id="NX_B3KS81"/>
<dbReference type="OpenTargets" id="ENSG00000226763"/>
<dbReference type="VEuPathDB" id="HostDB:ENSG00000226763"/>
<dbReference type="eggNOG" id="ENOG502SFJH">
    <property type="taxonomic scope" value="Eukaryota"/>
</dbReference>
<dbReference type="GeneTree" id="ENSGT00730000111657"/>
<dbReference type="HOGENOM" id="CLU_027650_1_0_1"/>
<dbReference type="InParanoid" id="B3KS81"/>
<dbReference type="OMA" id="ERDHSQT"/>
<dbReference type="OrthoDB" id="9634065at2759"/>
<dbReference type="PAN-GO" id="B3KS81">
    <property type="GO annotations" value="0 GO annotations based on evolutionary models"/>
</dbReference>
<dbReference type="PhylomeDB" id="B3KS81"/>
<dbReference type="PathwayCommons" id="B3KS81"/>
<dbReference type="SignaLink" id="B3KS81"/>
<dbReference type="BioGRID-ORCS" id="100170229">
    <property type="hits" value="9 hits in 1149 CRISPR screens"/>
</dbReference>
<dbReference type="GenomeRNAi" id="100170229"/>
<dbReference type="Pharos" id="B3KS81">
    <property type="development level" value="Tdark"/>
</dbReference>
<dbReference type="PRO" id="PR:B3KS81"/>
<dbReference type="Proteomes" id="UP000005640">
    <property type="component" value="Chromosome 19"/>
</dbReference>
<dbReference type="RNAct" id="B3KS81">
    <property type="molecule type" value="protein"/>
</dbReference>
<dbReference type="Bgee" id="ENSG00000226763">
    <property type="expression patterns" value="Expressed in left testis and 106 other cell types or tissues"/>
</dbReference>
<dbReference type="PANTHER" id="PTHR39414">
    <property type="entry name" value="SERINE/ARGININE REPETITIVE MATRIX PROTEIN 5-RELATED"/>
    <property type="match status" value="1"/>
</dbReference>
<dbReference type="PANTHER" id="PTHR39414:SF1">
    <property type="entry name" value="SERINE_ARGININE REPETITIVE MATRIX PROTEIN 5"/>
    <property type="match status" value="1"/>
</dbReference>